<keyword id="KW-0963">Cytoplasm</keyword>
<keyword id="KW-0647">Proteasome</keyword>
<keyword id="KW-1185">Reference proteome</keyword>
<comment type="function">
    <text evidence="1">Component of the proteasome core, a large protease complex with broad specificity involved in protein degradation.</text>
</comment>
<comment type="activity regulation">
    <text evidence="1">The formation of the proteasomal ATPase ARC-20S proteasome complex, likely via the docking of the C-termini of ARC into the intersubunit pockets in the alpha-rings, may trigger opening of the gate for substrate entry. Interconversion between the open-gate and close-gate conformations leads to a dynamic regulation of the 20S proteasome proteolysis activity.</text>
</comment>
<comment type="pathway">
    <text evidence="1">Protein degradation; proteasomal Pup-dependent pathway.</text>
</comment>
<comment type="subunit">
    <text evidence="1">The 20S proteasome core is composed of 14 alpha and 14 beta subunits that assemble into four stacked heptameric rings, resulting in a barrel-shaped structure. The two inner rings, each composed of seven catalytic beta subunits, are sandwiched by two outer rings, each composed of seven alpha subunits. The catalytic chamber with the active sites is on the inside of the barrel. Has a gated structure, the ends of the cylinder being occluded by the N-termini of the alpha-subunits. Is capped by the proteasome-associated ATPase, ARC.</text>
</comment>
<comment type="subcellular location">
    <subcellularLocation>
        <location evidence="1">Cytoplasm</location>
    </subcellularLocation>
</comment>
<comment type="similarity">
    <text evidence="1">Belongs to the peptidase T1A family.</text>
</comment>
<name>PSA_MYCTA</name>
<sequence length="248" mass="26881">MSFPYFISPEQAMRERSELARKGIARAKSVVALAYAGGVLFVAENPSRSLQKISELYDRVGFAAAGKFNEFDNLRRGGIQFADTRGYAYDRRDVTGRQLANVYAQTLGTIFTEQAKPYEVELCVAEVAHYGETKRPELYRITYDGSIADEPHFVVMGGTTEPIANALKESYAENASLTDALRIAVAALRAGSADTSGGDQPTLGVASLEVAVLDANRPRRAFRRITGSALQALLVDQESPQSDGESSG</sequence>
<evidence type="ECO:0000255" key="1">
    <source>
        <dbReference type="HAMAP-Rule" id="MF_00289"/>
    </source>
</evidence>
<protein>
    <recommendedName>
        <fullName evidence="1">Proteasome subunit alpha</fullName>
    </recommendedName>
    <alternativeName>
        <fullName evidence="1">20S proteasome alpha subunit</fullName>
    </alternativeName>
    <alternativeName>
        <fullName evidence="1">Proteasome core protein PrcA</fullName>
    </alternativeName>
</protein>
<proteinExistence type="inferred from homology"/>
<reference key="1">
    <citation type="journal article" date="2008" name="PLoS ONE">
        <title>Genetic basis of virulence attenuation revealed by comparative genomic analysis of Mycobacterium tuberculosis strain H37Ra versus H37Rv.</title>
        <authorList>
            <person name="Zheng H."/>
            <person name="Lu L."/>
            <person name="Wang B."/>
            <person name="Pu S."/>
            <person name="Zhang X."/>
            <person name="Zhu G."/>
            <person name="Shi W."/>
            <person name="Zhang L."/>
            <person name="Wang H."/>
            <person name="Wang S."/>
            <person name="Zhao G."/>
            <person name="Zhang Y."/>
        </authorList>
    </citation>
    <scope>NUCLEOTIDE SEQUENCE [LARGE SCALE GENOMIC DNA]</scope>
    <source>
        <strain>ATCC 25177 / H37Ra</strain>
    </source>
</reference>
<organism>
    <name type="scientific">Mycobacterium tuberculosis (strain ATCC 25177 / H37Ra)</name>
    <dbReference type="NCBI Taxonomy" id="419947"/>
    <lineage>
        <taxon>Bacteria</taxon>
        <taxon>Bacillati</taxon>
        <taxon>Actinomycetota</taxon>
        <taxon>Actinomycetes</taxon>
        <taxon>Mycobacteriales</taxon>
        <taxon>Mycobacteriaceae</taxon>
        <taxon>Mycobacterium</taxon>
        <taxon>Mycobacterium tuberculosis complex</taxon>
    </lineage>
</organism>
<gene>
    <name evidence="1" type="primary">prcA</name>
    <name type="ordered locus">MRA_2124</name>
</gene>
<accession>A5U4D5</accession>
<dbReference type="EMBL" id="CP000611">
    <property type="protein sequence ID" value="ABQ73885.1"/>
    <property type="molecule type" value="Genomic_DNA"/>
</dbReference>
<dbReference type="EMBL" id="EF619619">
    <property type="protein sequence ID" value="ABR14061.1"/>
    <property type="molecule type" value="Genomic_DNA"/>
</dbReference>
<dbReference type="RefSeq" id="WP_003906749.1">
    <property type="nucleotide sequence ID" value="NZ_CP016972.1"/>
</dbReference>
<dbReference type="EMDB" id="EMD-27223"/>
<dbReference type="EMDB" id="EMD-27224"/>
<dbReference type="EMDB" id="EMD-27225"/>
<dbReference type="EMDB" id="EMD-27226"/>
<dbReference type="EMDB" id="EMD-7097"/>
<dbReference type="EMDB" id="EMD-7098"/>
<dbReference type="SMR" id="A5U4D5"/>
<dbReference type="KEGG" id="mra:MRA_2124"/>
<dbReference type="eggNOG" id="COG0638">
    <property type="taxonomic scope" value="Bacteria"/>
</dbReference>
<dbReference type="HOGENOM" id="CLU_071031_0_0_11"/>
<dbReference type="UniPathway" id="UPA00997"/>
<dbReference type="Proteomes" id="UP000001988">
    <property type="component" value="Chromosome"/>
</dbReference>
<dbReference type="GO" id="GO:0005737">
    <property type="term" value="C:cytoplasm"/>
    <property type="evidence" value="ECO:0007669"/>
    <property type="project" value="UniProtKB-SubCell"/>
</dbReference>
<dbReference type="GO" id="GO:0019773">
    <property type="term" value="C:proteasome core complex, alpha-subunit complex"/>
    <property type="evidence" value="ECO:0007669"/>
    <property type="project" value="UniProtKB-UniRule"/>
</dbReference>
<dbReference type="GO" id="GO:0004298">
    <property type="term" value="F:threonine-type endopeptidase activity"/>
    <property type="evidence" value="ECO:0007669"/>
    <property type="project" value="InterPro"/>
</dbReference>
<dbReference type="GO" id="GO:0019941">
    <property type="term" value="P:modification-dependent protein catabolic process"/>
    <property type="evidence" value="ECO:0007669"/>
    <property type="project" value="UniProtKB-UniRule"/>
</dbReference>
<dbReference type="GO" id="GO:0010498">
    <property type="term" value="P:proteasomal protein catabolic process"/>
    <property type="evidence" value="ECO:0007669"/>
    <property type="project" value="UniProtKB-UniRule"/>
</dbReference>
<dbReference type="CDD" id="cd01906">
    <property type="entry name" value="proteasome_protease_HslV"/>
    <property type="match status" value="1"/>
</dbReference>
<dbReference type="FunFam" id="3.60.20.10:FF:000023">
    <property type="entry name" value="Proteasome subunit alpha"/>
    <property type="match status" value="1"/>
</dbReference>
<dbReference type="Gene3D" id="3.60.20.10">
    <property type="entry name" value="Glutamine Phosphoribosylpyrophosphate, subunit 1, domain 1"/>
    <property type="match status" value="1"/>
</dbReference>
<dbReference type="HAMAP" id="MF_00289_B">
    <property type="entry name" value="Proteasome_A_B"/>
    <property type="match status" value="1"/>
</dbReference>
<dbReference type="InterPro" id="IPR029055">
    <property type="entry name" value="Ntn_hydrolases_N"/>
</dbReference>
<dbReference type="InterPro" id="IPR050115">
    <property type="entry name" value="Proteasome_alpha"/>
</dbReference>
<dbReference type="InterPro" id="IPR023332">
    <property type="entry name" value="Proteasome_alpha-type"/>
</dbReference>
<dbReference type="InterPro" id="IPR022296">
    <property type="entry name" value="Proteasome_asu_bac"/>
</dbReference>
<dbReference type="InterPro" id="IPR001353">
    <property type="entry name" value="Proteasome_sua/b"/>
</dbReference>
<dbReference type="NCBIfam" id="TIGR03691">
    <property type="entry name" value="20S_bact_alpha"/>
    <property type="match status" value="1"/>
</dbReference>
<dbReference type="PANTHER" id="PTHR11599">
    <property type="entry name" value="PROTEASOME SUBUNIT ALPHA/BETA"/>
    <property type="match status" value="1"/>
</dbReference>
<dbReference type="Pfam" id="PF00227">
    <property type="entry name" value="Proteasome"/>
    <property type="match status" value="1"/>
</dbReference>
<dbReference type="SUPFAM" id="SSF56235">
    <property type="entry name" value="N-terminal nucleophile aminohydrolases (Ntn hydrolases)"/>
    <property type="match status" value="1"/>
</dbReference>
<dbReference type="PROSITE" id="PS51475">
    <property type="entry name" value="PROTEASOME_ALPHA_2"/>
    <property type="match status" value="1"/>
</dbReference>
<feature type="chain" id="PRO_0000397158" description="Proteasome subunit alpha">
    <location>
        <begin position="1"/>
        <end position="248"/>
    </location>
</feature>